<protein>
    <recommendedName>
        <fullName evidence="1">Dual-action ribosomal maturation protein DarP</fullName>
    </recommendedName>
    <alternativeName>
        <fullName evidence="1">Large ribosomal subunit assembly factor DarP</fullName>
    </alternativeName>
</protein>
<reference key="1">
    <citation type="journal article" date="2000" name="Nature">
        <title>DNA sequence of both chromosomes of the cholera pathogen Vibrio cholerae.</title>
        <authorList>
            <person name="Heidelberg J.F."/>
            <person name="Eisen J.A."/>
            <person name="Nelson W.C."/>
            <person name="Clayton R.A."/>
            <person name="Gwinn M.L."/>
            <person name="Dodson R.J."/>
            <person name="Haft D.H."/>
            <person name="Hickey E.K."/>
            <person name="Peterson J.D."/>
            <person name="Umayam L.A."/>
            <person name="Gill S.R."/>
            <person name="Nelson K.E."/>
            <person name="Read T.D."/>
            <person name="Tettelin H."/>
            <person name="Richardson D.L."/>
            <person name="Ermolaeva M.D."/>
            <person name="Vamathevan J.J."/>
            <person name="Bass S."/>
            <person name="Qin H."/>
            <person name="Dragoi I."/>
            <person name="Sellers P."/>
            <person name="McDonald L.A."/>
            <person name="Utterback T.R."/>
            <person name="Fleischmann R.D."/>
            <person name="Nierman W.C."/>
            <person name="White O."/>
            <person name="Salzberg S.L."/>
            <person name="Smith H.O."/>
            <person name="Colwell R.R."/>
            <person name="Mekalanos J.J."/>
            <person name="Venter J.C."/>
            <person name="Fraser C.M."/>
        </authorList>
    </citation>
    <scope>NUCLEOTIDE SEQUENCE [LARGE SCALE GENOMIC DNA]</scope>
    <source>
        <strain>ATCC 39315 / El Tor Inaba N16961</strain>
    </source>
</reference>
<keyword id="KW-0963">Cytoplasm</keyword>
<keyword id="KW-1185">Reference proteome</keyword>
<keyword id="KW-0690">Ribosome biogenesis</keyword>
<keyword id="KW-0694">RNA-binding</keyword>
<keyword id="KW-0699">rRNA-binding</keyword>
<evidence type="ECO:0000255" key="1">
    <source>
        <dbReference type="HAMAP-Rule" id="MF_00765"/>
    </source>
</evidence>
<sequence length="193" mass="22366">MMKNMARKNQKAPWEEEEEIIWVSRTELKNDMLALQKLGEELVELKPSALAKFPLPEDLAEAIKDAQRFKNEARRRQLQYIGKLMRHIDPEPLQAALDKLRNKHSQTTALLHKLEQLRDRIVAEGDSAIEVAMEQYPEADRQRLRLLARQASKEKAGNKPPKSSREIFQLLKEAMLAKQEIEEESEDDLDSAE</sequence>
<accession>Q9KP43</accession>
<dbReference type="EMBL" id="AE003852">
    <property type="protein sequence ID" value="AAF95677.1"/>
    <property type="molecule type" value="Genomic_DNA"/>
</dbReference>
<dbReference type="PIR" id="B82063">
    <property type="entry name" value="B82063"/>
</dbReference>
<dbReference type="RefSeq" id="NP_232164.1">
    <property type="nucleotide sequence ID" value="NC_002505.1"/>
</dbReference>
<dbReference type="SMR" id="Q9KP43"/>
<dbReference type="STRING" id="243277.VC_2536"/>
<dbReference type="DNASU" id="2615199"/>
<dbReference type="EnsemblBacteria" id="AAF95677">
    <property type="protein sequence ID" value="AAF95677"/>
    <property type="gene ID" value="VC_2536"/>
</dbReference>
<dbReference type="KEGG" id="vch:VC_2536"/>
<dbReference type="PATRIC" id="fig|243277.26.peg.2415"/>
<dbReference type="eggNOG" id="COG3028">
    <property type="taxonomic scope" value="Bacteria"/>
</dbReference>
<dbReference type="HOGENOM" id="CLU_106757_2_0_6"/>
<dbReference type="Proteomes" id="UP000000584">
    <property type="component" value="Chromosome 1"/>
</dbReference>
<dbReference type="GO" id="GO:0005829">
    <property type="term" value="C:cytosol"/>
    <property type="evidence" value="ECO:0000318"/>
    <property type="project" value="GO_Central"/>
</dbReference>
<dbReference type="GO" id="GO:0043022">
    <property type="term" value="F:ribosome binding"/>
    <property type="evidence" value="ECO:0007669"/>
    <property type="project" value="UniProtKB-UniRule"/>
</dbReference>
<dbReference type="GO" id="GO:0019843">
    <property type="term" value="F:rRNA binding"/>
    <property type="evidence" value="ECO:0007669"/>
    <property type="project" value="UniProtKB-UniRule"/>
</dbReference>
<dbReference type="GO" id="GO:1902626">
    <property type="term" value="P:assembly of large subunit precursor of preribosome"/>
    <property type="evidence" value="ECO:0007669"/>
    <property type="project" value="UniProtKB-UniRule"/>
</dbReference>
<dbReference type="CDD" id="cd16331">
    <property type="entry name" value="YjgA-like"/>
    <property type="match status" value="1"/>
</dbReference>
<dbReference type="FunFam" id="1.10.60.30:FF:000001">
    <property type="entry name" value="UPF0307 protein YjgA"/>
    <property type="match status" value="1"/>
</dbReference>
<dbReference type="FunFam" id="1.10.60.30:FF:000002">
    <property type="entry name" value="UPF0307 protein YjgA"/>
    <property type="match status" value="1"/>
</dbReference>
<dbReference type="Gene3D" id="1.10.60.30">
    <property type="entry name" value="PSPTO4464-like domains"/>
    <property type="match status" value="2"/>
</dbReference>
<dbReference type="HAMAP" id="MF_00765">
    <property type="entry name" value="DarP"/>
    <property type="match status" value="1"/>
</dbReference>
<dbReference type="InterPro" id="IPR006839">
    <property type="entry name" value="DarP"/>
</dbReference>
<dbReference type="InterPro" id="IPR023153">
    <property type="entry name" value="DarP_sf"/>
</dbReference>
<dbReference type="NCBIfam" id="NF003593">
    <property type="entry name" value="PRK05255.1-1"/>
    <property type="match status" value="1"/>
</dbReference>
<dbReference type="PANTHER" id="PTHR38101">
    <property type="entry name" value="UPF0307 PROTEIN YJGA"/>
    <property type="match status" value="1"/>
</dbReference>
<dbReference type="PANTHER" id="PTHR38101:SF1">
    <property type="entry name" value="UPF0307 PROTEIN YJGA"/>
    <property type="match status" value="1"/>
</dbReference>
<dbReference type="Pfam" id="PF04751">
    <property type="entry name" value="DarP"/>
    <property type="match status" value="1"/>
</dbReference>
<dbReference type="PIRSF" id="PIRSF016183">
    <property type="entry name" value="UCP016183"/>
    <property type="match status" value="1"/>
</dbReference>
<dbReference type="SUPFAM" id="SSF158710">
    <property type="entry name" value="PSPTO4464-like"/>
    <property type="match status" value="1"/>
</dbReference>
<feature type="chain" id="PRO_0000208231" description="Dual-action ribosomal maturation protein DarP">
    <location>
        <begin position="1"/>
        <end position="193"/>
    </location>
</feature>
<comment type="function">
    <text evidence="1">Member of a network of 50S ribosomal subunit biogenesis factors which assembles along the 30S-50S interface, preventing incorrect 23S rRNA structures from forming. Promotes peptidyl transferase center (PTC) maturation.</text>
</comment>
<comment type="subcellular location">
    <subcellularLocation>
        <location evidence="1">Cytoplasm</location>
    </subcellularLocation>
    <text evidence="1">Associates with late stage pre-50S ribosomal subunits.</text>
</comment>
<comment type="similarity">
    <text evidence="1">Belongs to the DarP family.</text>
</comment>
<gene>
    <name evidence="1" type="primary">darP</name>
    <name type="ordered locus">VC_2536</name>
</gene>
<organism>
    <name type="scientific">Vibrio cholerae serotype O1 (strain ATCC 39315 / El Tor Inaba N16961)</name>
    <dbReference type="NCBI Taxonomy" id="243277"/>
    <lineage>
        <taxon>Bacteria</taxon>
        <taxon>Pseudomonadati</taxon>
        <taxon>Pseudomonadota</taxon>
        <taxon>Gammaproteobacteria</taxon>
        <taxon>Vibrionales</taxon>
        <taxon>Vibrionaceae</taxon>
        <taxon>Vibrio</taxon>
    </lineage>
</organism>
<proteinExistence type="inferred from homology"/>
<name>DARP_VIBCH</name>